<name>RLMC_SHEPC</name>
<accession>A4Y9Y4</accession>
<feature type="chain" id="PRO_1000063008" description="23S rRNA (uracil(747)-C(5))-methyltransferase RlmC">
    <location>
        <begin position="1"/>
        <end position="389"/>
    </location>
</feature>
<feature type="active site" description="Nucleophile" evidence="1">
    <location>
        <position position="348"/>
    </location>
</feature>
<feature type="binding site" evidence="1">
    <location>
        <position position="12"/>
    </location>
    <ligand>
        <name>[4Fe-4S] cluster</name>
        <dbReference type="ChEBI" id="CHEBI:49883"/>
    </ligand>
</feature>
<feature type="binding site" evidence="1">
    <location>
        <position position="20"/>
    </location>
    <ligand>
        <name>[4Fe-4S] cluster</name>
        <dbReference type="ChEBI" id="CHEBI:49883"/>
    </ligand>
</feature>
<feature type="binding site" evidence="1">
    <location>
        <position position="23"/>
    </location>
    <ligand>
        <name>[4Fe-4S] cluster</name>
        <dbReference type="ChEBI" id="CHEBI:49883"/>
    </ligand>
</feature>
<feature type="binding site" evidence="1">
    <location>
        <position position="99"/>
    </location>
    <ligand>
        <name>[4Fe-4S] cluster</name>
        <dbReference type="ChEBI" id="CHEBI:49883"/>
    </ligand>
</feature>
<feature type="binding site" evidence="1">
    <location>
        <position position="224"/>
    </location>
    <ligand>
        <name>S-adenosyl-L-methionine</name>
        <dbReference type="ChEBI" id="CHEBI:59789"/>
    </ligand>
</feature>
<feature type="binding site" evidence="1">
    <location>
        <position position="253"/>
    </location>
    <ligand>
        <name>S-adenosyl-L-methionine</name>
        <dbReference type="ChEBI" id="CHEBI:59789"/>
    </ligand>
</feature>
<feature type="binding site" evidence="1">
    <location>
        <position position="274"/>
    </location>
    <ligand>
        <name>S-adenosyl-L-methionine</name>
        <dbReference type="ChEBI" id="CHEBI:59789"/>
    </ligand>
</feature>
<feature type="binding site" evidence="1">
    <location>
        <position position="321"/>
    </location>
    <ligand>
        <name>S-adenosyl-L-methionine</name>
        <dbReference type="ChEBI" id="CHEBI:59789"/>
    </ligand>
</feature>
<protein>
    <recommendedName>
        <fullName evidence="1">23S rRNA (uracil(747)-C(5))-methyltransferase RlmC</fullName>
        <ecNumber evidence="1">2.1.1.189</ecNumber>
    </recommendedName>
    <alternativeName>
        <fullName evidence="1">23S rRNA(m5U747)-methyltransferase</fullName>
    </alternativeName>
</protein>
<reference key="1">
    <citation type="submission" date="2007-04" db="EMBL/GenBank/DDBJ databases">
        <title>Complete sequence of Shewanella putrefaciens CN-32.</title>
        <authorList>
            <consortium name="US DOE Joint Genome Institute"/>
            <person name="Copeland A."/>
            <person name="Lucas S."/>
            <person name="Lapidus A."/>
            <person name="Barry K."/>
            <person name="Detter J.C."/>
            <person name="Glavina del Rio T."/>
            <person name="Hammon N."/>
            <person name="Israni S."/>
            <person name="Dalin E."/>
            <person name="Tice H."/>
            <person name="Pitluck S."/>
            <person name="Chain P."/>
            <person name="Malfatti S."/>
            <person name="Shin M."/>
            <person name="Vergez L."/>
            <person name="Schmutz J."/>
            <person name="Larimer F."/>
            <person name="Land M."/>
            <person name="Hauser L."/>
            <person name="Kyrpides N."/>
            <person name="Mikhailova N."/>
            <person name="Romine M.F."/>
            <person name="Fredrickson J."/>
            <person name="Tiedje J."/>
            <person name="Richardson P."/>
        </authorList>
    </citation>
    <scope>NUCLEOTIDE SEQUENCE [LARGE SCALE GENOMIC DNA]</scope>
    <source>
        <strain>CN-32 / ATCC BAA-453</strain>
    </source>
</reference>
<comment type="function">
    <text evidence="1">Catalyzes the formation of 5-methyl-uridine at position 747 (m5U747) in 23S rRNA.</text>
</comment>
<comment type="catalytic activity">
    <reaction evidence="1">
        <text>uridine(747) in 23S rRNA + S-adenosyl-L-methionine = 5-methyluridine(747) in 23S rRNA + S-adenosyl-L-homocysteine + H(+)</text>
        <dbReference type="Rhea" id="RHEA:42628"/>
        <dbReference type="Rhea" id="RHEA-COMP:10154"/>
        <dbReference type="Rhea" id="RHEA-COMP:10155"/>
        <dbReference type="ChEBI" id="CHEBI:15378"/>
        <dbReference type="ChEBI" id="CHEBI:57856"/>
        <dbReference type="ChEBI" id="CHEBI:59789"/>
        <dbReference type="ChEBI" id="CHEBI:65315"/>
        <dbReference type="ChEBI" id="CHEBI:74447"/>
        <dbReference type="EC" id="2.1.1.189"/>
    </reaction>
</comment>
<comment type="similarity">
    <text evidence="1">Belongs to the class I-like SAM-binding methyltransferase superfamily. RNA M5U methyltransferase family. RlmC subfamily.</text>
</comment>
<organism>
    <name type="scientific">Shewanella putrefaciens (strain CN-32 / ATCC BAA-453)</name>
    <dbReference type="NCBI Taxonomy" id="319224"/>
    <lineage>
        <taxon>Bacteria</taxon>
        <taxon>Pseudomonadati</taxon>
        <taxon>Pseudomonadota</taxon>
        <taxon>Gammaproteobacteria</taxon>
        <taxon>Alteromonadales</taxon>
        <taxon>Shewanellaceae</taxon>
        <taxon>Shewanella</taxon>
    </lineage>
</organism>
<proteinExistence type="inferred from homology"/>
<dbReference type="EC" id="2.1.1.189" evidence="1"/>
<dbReference type="EMBL" id="CP000681">
    <property type="protein sequence ID" value="ABP76767.1"/>
    <property type="molecule type" value="Genomic_DNA"/>
</dbReference>
<dbReference type="SMR" id="A4Y9Y4"/>
<dbReference type="STRING" id="319224.Sputcn32_3054"/>
<dbReference type="KEGG" id="spc:Sputcn32_3054"/>
<dbReference type="eggNOG" id="COG2265">
    <property type="taxonomic scope" value="Bacteria"/>
</dbReference>
<dbReference type="HOGENOM" id="CLU_014689_0_0_6"/>
<dbReference type="GO" id="GO:0051539">
    <property type="term" value="F:4 iron, 4 sulfur cluster binding"/>
    <property type="evidence" value="ECO:0007669"/>
    <property type="project" value="UniProtKB-KW"/>
</dbReference>
<dbReference type="GO" id="GO:0005506">
    <property type="term" value="F:iron ion binding"/>
    <property type="evidence" value="ECO:0007669"/>
    <property type="project" value="UniProtKB-UniRule"/>
</dbReference>
<dbReference type="GO" id="GO:0070041">
    <property type="term" value="F:rRNA (uridine-C5-)-methyltransferase activity"/>
    <property type="evidence" value="ECO:0007669"/>
    <property type="project" value="UniProtKB-UniRule"/>
</dbReference>
<dbReference type="GO" id="GO:0070475">
    <property type="term" value="P:rRNA base methylation"/>
    <property type="evidence" value="ECO:0007669"/>
    <property type="project" value="TreeGrafter"/>
</dbReference>
<dbReference type="CDD" id="cd02440">
    <property type="entry name" value="AdoMet_MTases"/>
    <property type="match status" value="1"/>
</dbReference>
<dbReference type="Gene3D" id="2.40.50.1070">
    <property type="match status" value="1"/>
</dbReference>
<dbReference type="Gene3D" id="3.40.50.150">
    <property type="entry name" value="Vaccinia Virus protein VP39"/>
    <property type="match status" value="1"/>
</dbReference>
<dbReference type="HAMAP" id="MF_01012">
    <property type="entry name" value="23SrRNA_methyltr_RlmC"/>
    <property type="match status" value="1"/>
</dbReference>
<dbReference type="InterPro" id="IPR011825">
    <property type="entry name" value="23SrRNA_MeTrfase_RlmC"/>
</dbReference>
<dbReference type="InterPro" id="IPR030390">
    <property type="entry name" value="MeTrfase_TrmA_AS"/>
</dbReference>
<dbReference type="InterPro" id="IPR030391">
    <property type="entry name" value="MeTrfase_TrmA_CS"/>
</dbReference>
<dbReference type="InterPro" id="IPR029063">
    <property type="entry name" value="SAM-dependent_MTases_sf"/>
</dbReference>
<dbReference type="InterPro" id="IPR010280">
    <property type="entry name" value="U5_MeTrfase_fam"/>
</dbReference>
<dbReference type="NCBIfam" id="TIGR02085">
    <property type="entry name" value="meth_trns_rumB"/>
    <property type="match status" value="1"/>
</dbReference>
<dbReference type="NCBIfam" id="TIGR00479">
    <property type="entry name" value="rumA"/>
    <property type="match status" value="1"/>
</dbReference>
<dbReference type="PANTHER" id="PTHR11061">
    <property type="entry name" value="RNA M5U METHYLTRANSFERASE"/>
    <property type="match status" value="1"/>
</dbReference>
<dbReference type="PANTHER" id="PTHR11061:SF30">
    <property type="entry name" value="TRNA (URACIL(54)-C(5))-METHYLTRANSFERASE"/>
    <property type="match status" value="1"/>
</dbReference>
<dbReference type="Pfam" id="PF05958">
    <property type="entry name" value="tRNA_U5-meth_tr"/>
    <property type="match status" value="1"/>
</dbReference>
<dbReference type="SUPFAM" id="SSF53335">
    <property type="entry name" value="S-adenosyl-L-methionine-dependent methyltransferases"/>
    <property type="match status" value="1"/>
</dbReference>
<dbReference type="PROSITE" id="PS51687">
    <property type="entry name" value="SAM_MT_RNA_M5U"/>
    <property type="match status" value="1"/>
</dbReference>
<dbReference type="PROSITE" id="PS01230">
    <property type="entry name" value="TRMA_1"/>
    <property type="match status" value="1"/>
</dbReference>
<dbReference type="PROSITE" id="PS01231">
    <property type="entry name" value="TRMA_2"/>
    <property type="match status" value="1"/>
</dbReference>
<sequence length="389" mass="43213">MSAVIVNTVEQCGYFNRGQCQSCRHIQVPMAQQLMAKSLELQQLLKPFVAPSAAIFYPPVTGEATAFRNKAKMVVLGAAHAPVLGIVSPSGEAVSLCDCLLYPSDMQKLLHRLTQFVQQAGIPPYRVDKAKGELKFILLTRSQVRGEYLLRFVLRSHNSIERIERALPTLLAEYPQINVVSVNIQPIHMAILEGGEEIFLTENTRLEERFNDVPLFIRPKSFFQTNPQVAAQLYQTAREWVAEFAPKSLWDLFCGVGGFGLHCATKDIALTGIEIEAEAISCAQISANLMGLEKVQFMALDSTDFAQGKNAADKPDLIIVNPPRRGIGEALCQSLSEFAPKAILYSSCNPKTLAKDLEHIQGYHLTKVQLFDLFPHTDHFEVLAMLVKD</sequence>
<evidence type="ECO:0000255" key="1">
    <source>
        <dbReference type="HAMAP-Rule" id="MF_01012"/>
    </source>
</evidence>
<keyword id="KW-0004">4Fe-4S</keyword>
<keyword id="KW-0408">Iron</keyword>
<keyword id="KW-0411">Iron-sulfur</keyword>
<keyword id="KW-0479">Metal-binding</keyword>
<keyword id="KW-0489">Methyltransferase</keyword>
<keyword id="KW-0698">rRNA processing</keyword>
<keyword id="KW-0949">S-adenosyl-L-methionine</keyword>
<keyword id="KW-0808">Transferase</keyword>
<gene>
    <name evidence="1" type="primary">rlmC</name>
    <name type="synonym">rumB</name>
    <name type="ordered locus">Sputcn32_3054</name>
</gene>